<reference key="1">
    <citation type="journal article" date="2009" name="J. Bacteriol.">
        <title>Role of conjugative elements in the evolution of the multidrug-resistant pandemic clone Streptococcus pneumoniae Spain23F ST81.</title>
        <authorList>
            <person name="Croucher N.J."/>
            <person name="Walker D."/>
            <person name="Romero P."/>
            <person name="Lennard N."/>
            <person name="Paterson G.K."/>
            <person name="Bason N.C."/>
            <person name="Mitchell A.M."/>
            <person name="Quail M.A."/>
            <person name="Andrew P.W."/>
            <person name="Parkhill J."/>
            <person name="Bentley S.D."/>
            <person name="Mitchell T.J."/>
        </authorList>
    </citation>
    <scope>NUCLEOTIDE SEQUENCE [LARGE SCALE GENOMIC DNA]</scope>
    <source>
        <strain>ATCC 700669 / Spain 23F-1</strain>
    </source>
</reference>
<gene>
    <name evidence="1" type="primary">hrcA</name>
    <name type="ordered locus">SPN23F04660</name>
</gene>
<feature type="chain" id="PRO_1000118318" description="Heat-inducible transcription repressor HrcA">
    <location>
        <begin position="1"/>
        <end position="344"/>
    </location>
</feature>
<evidence type="ECO:0000255" key="1">
    <source>
        <dbReference type="HAMAP-Rule" id="MF_00081"/>
    </source>
</evidence>
<accession>B8ZLY7</accession>
<comment type="function">
    <text evidence="1">Negative regulator of class I heat shock genes (grpE-dnaK-dnaJ and groELS operons). Prevents heat-shock induction of these operons.</text>
</comment>
<comment type="similarity">
    <text evidence="1">Belongs to the HrcA family.</text>
</comment>
<sequence>MVTERQQDILNLIIDIFTKTHEPVGSKALQESINSSSATIRNDMAELEKQGLLEKAHTSSGRMPSVAGFQYYVKHSLDFDRLAENEVYEIVKAFDQEFFKLEDILQEAANLLTDLSGCTVVALDVEPSRQRLTAFDIVVLGQHTALAVFTLDESRTVTSQFLIPRNFLQEDLLKLKSIIQERFLGHTVLDIHYKIRTEIPQIIQRYFTTTDNVIDLFEHIFKEMFNENIVMAGKVNLLNFANLAAYQFFDQPQKVALEIREGLREDQMQNVRVADGQESCLADLAVISSKFLIPYRGVGILAIIGPVNLDYQQLINQINVVNRVLTMKLTDFYRYLSSNHYEVH</sequence>
<proteinExistence type="inferred from homology"/>
<name>HRCA_STRPJ</name>
<organism>
    <name type="scientific">Streptococcus pneumoniae (strain ATCC 700669 / Spain 23F-1)</name>
    <dbReference type="NCBI Taxonomy" id="561276"/>
    <lineage>
        <taxon>Bacteria</taxon>
        <taxon>Bacillati</taxon>
        <taxon>Bacillota</taxon>
        <taxon>Bacilli</taxon>
        <taxon>Lactobacillales</taxon>
        <taxon>Streptococcaceae</taxon>
        <taxon>Streptococcus</taxon>
    </lineage>
</organism>
<dbReference type="EMBL" id="FM211187">
    <property type="protein sequence ID" value="CAR68311.1"/>
    <property type="molecule type" value="Genomic_DNA"/>
</dbReference>
<dbReference type="RefSeq" id="WP_000255770.1">
    <property type="nucleotide sequence ID" value="NC_011900.1"/>
</dbReference>
<dbReference type="SMR" id="B8ZLY7"/>
<dbReference type="KEGG" id="sne:SPN23F04660"/>
<dbReference type="HOGENOM" id="CLU_050019_1_0_9"/>
<dbReference type="GO" id="GO:0003677">
    <property type="term" value="F:DNA binding"/>
    <property type="evidence" value="ECO:0007669"/>
    <property type="project" value="InterPro"/>
</dbReference>
<dbReference type="GO" id="GO:0045892">
    <property type="term" value="P:negative regulation of DNA-templated transcription"/>
    <property type="evidence" value="ECO:0007669"/>
    <property type="project" value="UniProtKB-UniRule"/>
</dbReference>
<dbReference type="Gene3D" id="3.30.450.40">
    <property type="match status" value="1"/>
</dbReference>
<dbReference type="Gene3D" id="3.30.390.60">
    <property type="entry name" value="Heat-inducible transcription repressor hrca homolog, domain 3"/>
    <property type="match status" value="1"/>
</dbReference>
<dbReference type="Gene3D" id="1.10.10.10">
    <property type="entry name" value="Winged helix-like DNA-binding domain superfamily/Winged helix DNA-binding domain"/>
    <property type="match status" value="1"/>
</dbReference>
<dbReference type="HAMAP" id="MF_00081">
    <property type="entry name" value="HrcA"/>
    <property type="match status" value="1"/>
</dbReference>
<dbReference type="InterPro" id="IPR029016">
    <property type="entry name" value="GAF-like_dom_sf"/>
</dbReference>
<dbReference type="InterPro" id="IPR002571">
    <property type="entry name" value="HrcA"/>
</dbReference>
<dbReference type="InterPro" id="IPR021153">
    <property type="entry name" value="HrcA_C"/>
</dbReference>
<dbReference type="InterPro" id="IPR036388">
    <property type="entry name" value="WH-like_DNA-bd_sf"/>
</dbReference>
<dbReference type="InterPro" id="IPR036390">
    <property type="entry name" value="WH_DNA-bd_sf"/>
</dbReference>
<dbReference type="InterPro" id="IPR005104">
    <property type="entry name" value="WHTH_HrcA_DNA-bd"/>
</dbReference>
<dbReference type="InterPro" id="IPR023120">
    <property type="entry name" value="WHTH_transcript_rep_HrcA_IDD"/>
</dbReference>
<dbReference type="NCBIfam" id="TIGR00331">
    <property type="entry name" value="hrcA"/>
    <property type="match status" value="1"/>
</dbReference>
<dbReference type="PANTHER" id="PTHR34824">
    <property type="entry name" value="HEAT-INDUCIBLE TRANSCRIPTION REPRESSOR HRCA"/>
    <property type="match status" value="1"/>
</dbReference>
<dbReference type="PANTHER" id="PTHR34824:SF1">
    <property type="entry name" value="HEAT-INDUCIBLE TRANSCRIPTION REPRESSOR HRCA"/>
    <property type="match status" value="1"/>
</dbReference>
<dbReference type="Pfam" id="PF01628">
    <property type="entry name" value="HrcA"/>
    <property type="match status" value="1"/>
</dbReference>
<dbReference type="Pfam" id="PF03444">
    <property type="entry name" value="HrcA_DNA-bdg"/>
    <property type="match status" value="1"/>
</dbReference>
<dbReference type="PIRSF" id="PIRSF005485">
    <property type="entry name" value="HrcA"/>
    <property type="match status" value="1"/>
</dbReference>
<dbReference type="SUPFAM" id="SSF55781">
    <property type="entry name" value="GAF domain-like"/>
    <property type="match status" value="1"/>
</dbReference>
<dbReference type="SUPFAM" id="SSF46785">
    <property type="entry name" value="Winged helix' DNA-binding domain"/>
    <property type="match status" value="1"/>
</dbReference>
<keyword id="KW-0678">Repressor</keyword>
<keyword id="KW-0346">Stress response</keyword>
<keyword id="KW-0804">Transcription</keyword>
<keyword id="KW-0805">Transcription regulation</keyword>
<protein>
    <recommendedName>
        <fullName evidence="1">Heat-inducible transcription repressor HrcA</fullName>
    </recommendedName>
</protein>